<proteinExistence type="inferred from homology"/>
<sequence>MAKGARDKIKLESTAGTGHFYTTTKNKRNMPEKMAIKKFDPVVRKHVEYKETKIK</sequence>
<organism>
    <name type="scientific">Burkholderia orbicola (strain MC0-3)</name>
    <dbReference type="NCBI Taxonomy" id="406425"/>
    <lineage>
        <taxon>Bacteria</taxon>
        <taxon>Pseudomonadati</taxon>
        <taxon>Pseudomonadota</taxon>
        <taxon>Betaproteobacteria</taxon>
        <taxon>Burkholderiales</taxon>
        <taxon>Burkholderiaceae</taxon>
        <taxon>Burkholderia</taxon>
        <taxon>Burkholderia cepacia complex</taxon>
        <taxon>Burkholderia orbicola</taxon>
    </lineage>
</organism>
<evidence type="ECO:0000255" key="1">
    <source>
        <dbReference type="HAMAP-Rule" id="MF_00294"/>
    </source>
</evidence>
<evidence type="ECO:0000305" key="2"/>
<feature type="chain" id="PRO_1000115103" description="Large ribosomal subunit protein bL33">
    <location>
        <begin position="1"/>
        <end position="55"/>
    </location>
</feature>
<name>RL33_BURO0</name>
<comment type="similarity">
    <text evidence="1">Belongs to the bacterial ribosomal protein bL33 family.</text>
</comment>
<keyword id="KW-0687">Ribonucleoprotein</keyword>
<keyword id="KW-0689">Ribosomal protein</keyword>
<reference key="1">
    <citation type="submission" date="2008-02" db="EMBL/GenBank/DDBJ databases">
        <title>Complete sequence of chromosome 1 of Burkholderia cenocepacia MC0-3.</title>
        <authorList>
            <person name="Copeland A."/>
            <person name="Lucas S."/>
            <person name="Lapidus A."/>
            <person name="Barry K."/>
            <person name="Bruce D."/>
            <person name="Goodwin L."/>
            <person name="Glavina del Rio T."/>
            <person name="Dalin E."/>
            <person name="Tice H."/>
            <person name="Pitluck S."/>
            <person name="Chain P."/>
            <person name="Malfatti S."/>
            <person name="Shin M."/>
            <person name="Vergez L."/>
            <person name="Schmutz J."/>
            <person name="Larimer F."/>
            <person name="Land M."/>
            <person name="Hauser L."/>
            <person name="Kyrpides N."/>
            <person name="Mikhailova N."/>
            <person name="Tiedje J."/>
            <person name="Richardson P."/>
        </authorList>
    </citation>
    <scope>NUCLEOTIDE SEQUENCE [LARGE SCALE GENOMIC DNA]</scope>
    <source>
        <strain>MC0-3</strain>
    </source>
</reference>
<dbReference type="EMBL" id="CP000958">
    <property type="protein sequence ID" value="ACA91689.1"/>
    <property type="molecule type" value="Genomic_DNA"/>
</dbReference>
<dbReference type="RefSeq" id="WP_006478046.1">
    <property type="nucleotide sequence ID" value="NC_010508.1"/>
</dbReference>
<dbReference type="SMR" id="B1JXB4"/>
<dbReference type="GeneID" id="98107655"/>
<dbReference type="KEGG" id="bcm:Bcenmc03_2528"/>
<dbReference type="HOGENOM" id="CLU_190949_1_1_4"/>
<dbReference type="Proteomes" id="UP000002169">
    <property type="component" value="Chromosome 1"/>
</dbReference>
<dbReference type="GO" id="GO:0022625">
    <property type="term" value="C:cytosolic large ribosomal subunit"/>
    <property type="evidence" value="ECO:0007669"/>
    <property type="project" value="TreeGrafter"/>
</dbReference>
<dbReference type="GO" id="GO:0003735">
    <property type="term" value="F:structural constituent of ribosome"/>
    <property type="evidence" value="ECO:0007669"/>
    <property type="project" value="InterPro"/>
</dbReference>
<dbReference type="GO" id="GO:0006412">
    <property type="term" value="P:translation"/>
    <property type="evidence" value="ECO:0007669"/>
    <property type="project" value="UniProtKB-UniRule"/>
</dbReference>
<dbReference type="FunFam" id="2.20.28.120:FF:000001">
    <property type="entry name" value="50S ribosomal protein L33"/>
    <property type="match status" value="1"/>
</dbReference>
<dbReference type="Gene3D" id="2.20.28.120">
    <property type="entry name" value="Ribosomal protein L33"/>
    <property type="match status" value="1"/>
</dbReference>
<dbReference type="HAMAP" id="MF_00294">
    <property type="entry name" value="Ribosomal_bL33"/>
    <property type="match status" value="1"/>
</dbReference>
<dbReference type="InterPro" id="IPR001705">
    <property type="entry name" value="Ribosomal_bL33"/>
</dbReference>
<dbReference type="InterPro" id="IPR018264">
    <property type="entry name" value="Ribosomal_bL33_CS"/>
</dbReference>
<dbReference type="InterPro" id="IPR038584">
    <property type="entry name" value="Ribosomal_bL33_sf"/>
</dbReference>
<dbReference type="InterPro" id="IPR011332">
    <property type="entry name" value="Ribosomal_zn-bd"/>
</dbReference>
<dbReference type="NCBIfam" id="NF001860">
    <property type="entry name" value="PRK00595.1"/>
    <property type="match status" value="1"/>
</dbReference>
<dbReference type="NCBIfam" id="TIGR01023">
    <property type="entry name" value="rpmG_bact"/>
    <property type="match status" value="1"/>
</dbReference>
<dbReference type="PANTHER" id="PTHR15238">
    <property type="entry name" value="54S RIBOSOMAL PROTEIN L39, MITOCHONDRIAL"/>
    <property type="match status" value="1"/>
</dbReference>
<dbReference type="PANTHER" id="PTHR15238:SF1">
    <property type="entry name" value="LARGE RIBOSOMAL SUBUNIT PROTEIN BL33M"/>
    <property type="match status" value="1"/>
</dbReference>
<dbReference type="Pfam" id="PF00471">
    <property type="entry name" value="Ribosomal_L33"/>
    <property type="match status" value="1"/>
</dbReference>
<dbReference type="SUPFAM" id="SSF57829">
    <property type="entry name" value="Zn-binding ribosomal proteins"/>
    <property type="match status" value="1"/>
</dbReference>
<dbReference type="PROSITE" id="PS00582">
    <property type="entry name" value="RIBOSOMAL_L33"/>
    <property type="match status" value="1"/>
</dbReference>
<accession>B1JXB4</accession>
<gene>
    <name evidence="1" type="primary">rpmG</name>
    <name type="ordered locus">Bcenmc03_2528</name>
</gene>
<protein>
    <recommendedName>
        <fullName evidence="1">Large ribosomal subunit protein bL33</fullName>
    </recommendedName>
    <alternativeName>
        <fullName evidence="2">50S ribosomal protein L33</fullName>
    </alternativeName>
</protein>